<protein>
    <recommendedName>
        <fullName>Follitropin subunit beta</fullName>
    </recommendedName>
    <alternativeName>
        <fullName>Follicle-stimulating hormone beta subunit</fullName>
        <shortName>FSH-B</shortName>
        <shortName>FSH-beta</shortName>
    </alternativeName>
    <alternativeName>
        <fullName>Follitropin beta chain</fullName>
    </alternativeName>
</protein>
<dbReference type="EMBL" id="AY156688">
    <property type="protein sequence ID" value="AAN84782.1"/>
    <property type="molecule type" value="mRNA"/>
</dbReference>
<dbReference type="SMR" id="Q8HY84"/>
<dbReference type="GlyCosmos" id="Q8HY84">
    <property type="glycosylation" value="2 sites, No reported glycans"/>
</dbReference>
<dbReference type="GO" id="GO:0005737">
    <property type="term" value="C:cytoplasm"/>
    <property type="evidence" value="ECO:0007669"/>
    <property type="project" value="TreeGrafter"/>
</dbReference>
<dbReference type="GO" id="GO:0005615">
    <property type="term" value="C:extracellular space"/>
    <property type="evidence" value="ECO:0000250"/>
    <property type="project" value="UniProtKB"/>
</dbReference>
<dbReference type="GO" id="GO:0016914">
    <property type="term" value="C:follicle-stimulating hormone complex"/>
    <property type="evidence" value="ECO:0000250"/>
    <property type="project" value="UniProtKB"/>
</dbReference>
<dbReference type="GO" id="GO:0016913">
    <property type="term" value="F:follicle-stimulating hormone activity"/>
    <property type="evidence" value="ECO:0000250"/>
    <property type="project" value="UniProtKB"/>
</dbReference>
<dbReference type="GO" id="GO:0042699">
    <property type="term" value="P:follicle-stimulating hormone signaling pathway"/>
    <property type="evidence" value="ECO:0007669"/>
    <property type="project" value="TreeGrafter"/>
</dbReference>
<dbReference type="GO" id="GO:0007186">
    <property type="term" value="P:G protein-coupled receptor signaling pathway"/>
    <property type="evidence" value="ECO:0000250"/>
    <property type="project" value="UniProtKB"/>
</dbReference>
<dbReference type="GO" id="GO:0010469">
    <property type="term" value="P:regulation of signaling receptor activity"/>
    <property type="evidence" value="ECO:0000250"/>
    <property type="project" value="UniProtKB"/>
</dbReference>
<dbReference type="CDD" id="cd00069">
    <property type="entry name" value="GHB_like"/>
    <property type="match status" value="1"/>
</dbReference>
<dbReference type="FunFam" id="2.10.90.10:FF:000007">
    <property type="entry name" value="Luteinizing hormone beta subunit"/>
    <property type="match status" value="1"/>
</dbReference>
<dbReference type="Gene3D" id="2.10.90.10">
    <property type="entry name" value="Cystine-knot cytokines"/>
    <property type="match status" value="1"/>
</dbReference>
<dbReference type="InterPro" id="IPR029034">
    <property type="entry name" value="Cystine-knot_cytokine"/>
</dbReference>
<dbReference type="InterPro" id="IPR006208">
    <property type="entry name" value="Glyco_hormone_CN"/>
</dbReference>
<dbReference type="InterPro" id="IPR001545">
    <property type="entry name" value="Gonadotropin_bsu"/>
</dbReference>
<dbReference type="InterPro" id="IPR018245">
    <property type="entry name" value="Gonadotropin_bsu_CS"/>
</dbReference>
<dbReference type="PANTHER" id="PTHR11515:SF17">
    <property type="entry name" value="FOLLITROPIN SUBUNIT BETA"/>
    <property type="match status" value="1"/>
</dbReference>
<dbReference type="PANTHER" id="PTHR11515">
    <property type="entry name" value="GLYCOPROTEIN HORMONE BETA CHAIN"/>
    <property type="match status" value="1"/>
</dbReference>
<dbReference type="Pfam" id="PF00007">
    <property type="entry name" value="Cys_knot"/>
    <property type="match status" value="1"/>
</dbReference>
<dbReference type="SMART" id="SM00068">
    <property type="entry name" value="GHB"/>
    <property type="match status" value="1"/>
</dbReference>
<dbReference type="SUPFAM" id="SSF57501">
    <property type="entry name" value="Cystine-knot cytokines"/>
    <property type="match status" value="1"/>
</dbReference>
<dbReference type="PROSITE" id="PS00261">
    <property type="entry name" value="GLYCO_HORMONE_BETA_1"/>
    <property type="match status" value="1"/>
</dbReference>
<dbReference type="PROSITE" id="PS00689">
    <property type="entry name" value="GLYCO_HORMONE_BETA_2"/>
    <property type="match status" value="1"/>
</dbReference>
<accession>Q8HY84</accession>
<reference key="1">
    <citation type="submission" date="2002-09" db="EMBL/GenBank/DDBJ databases">
        <title>Nucleotide sequence of cloned cDNA for beta subunit of Cervus nippon follicle stimulating hormone.</title>
        <authorList>
            <person name="Guan H.-B."/>
            <person name="Li Q.-Z."/>
            <person name="Zhang L."/>
        </authorList>
    </citation>
    <scope>NUCLEOTIDE SEQUENCE [MRNA]</scope>
</reference>
<sequence length="129" mass="14551">MKSVQFCFLFCCWRATCCRSCELTNITITVEKEECSFCISINTTWCAGYCYTRDLVYRDPARPNIQKTCTFKELVYETVRVPGCAHRADSLHTYPVATACHCGKCDSGSTDCTVRGLGPSYCSFSDIRE</sequence>
<keyword id="KW-1015">Disulfide bond</keyword>
<keyword id="KW-0325">Glycoprotein</keyword>
<keyword id="KW-0372">Hormone</keyword>
<keyword id="KW-0964">Secreted</keyword>
<keyword id="KW-0732">Signal</keyword>
<feature type="signal peptide" evidence="1">
    <location>
        <begin position="1"/>
        <end position="18"/>
    </location>
</feature>
<feature type="chain" id="PRO_0000011709" description="Follitropin subunit beta">
    <location>
        <begin position="19"/>
        <end position="129"/>
    </location>
</feature>
<feature type="glycosylation site" description="N-linked (GlcNAc...) asparagine" evidence="2">
    <location>
        <position position="25"/>
    </location>
</feature>
<feature type="glycosylation site" description="N-linked (GlcNAc...) asparagine" evidence="2">
    <location>
        <position position="42"/>
    </location>
</feature>
<feature type="disulfide bond" evidence="2">
    <location>
        <begin position="21"/>
        <end position="69"/>
    </location>
</feature>
<feature type="disulfide bond" evidence="2">
    <location>
        <begin position="35"/>
        <end position="84"/>
    </location>
</feature>
<feature type="disulfide bond" evidence="2">
    <location>
        <begin position="38"/>
        <end position="122"/>
    </location>
</feature>
<feature type="disulfide bond" evidence="2">
    <location>
        <begin position="46"/>
        <end position="100"/>
    </location>
</feature>
<feature type="disulfide bond" evidence="2">
    <location>
        <begin position="50"/>
        <end position="102"/>
    </location>
</feature>
<feature type="disulfide bond" evidence="2">
    <location>
        <begin position="105"/>
        <end position="112"/>
    </location>
</feature>
<organism>
    <name type="scientific">Cervus nippon</name>
    <name type="common">Sika deer</name>
    <dbReference type="NCBI Taxonomy" id="9863"/>
    <lineage>
        <taxon>Eukaryota</taxon>
        <taxon>Metazoa</taxon>
        <taxon>Chordata</taxon>
        <taxon>Craniata</taxon>
        <taxon>Vertebrata</taxon>
        <taxon>Euteleostomi</taxon>
        <taxon>Mammalia</taxon>
        <taxon>Eutheria</taxon>
        <taxon>Laurasiatheria</taxon>
        <taxon>Artiodactyla</taxon>
        <taxon>Ruminantia</taxon>
        <taxon>Pecora</taxon>
        <taxon>Cervidae</taxon>
        <taxon>Cervinae</taxon>
        <taxon>Cervus</taxon>
    </lineage>
</organism>
<evidence type="ECO:0000250" key="1"/>
<evidence type="ECO:0000250" key="2">
    <source>
        <dbReference type="UniProtKB" id="P01225"/>
    </source>
</evidence>
<evidence type="ECO:0000305" key="3"/>
<name>FSHB_CERNI</name>
<comment type="function">
    <text evidence="2">Together with the alpha chain CGA constitutes follitropin, the follicle-stimulating hormone, and provides its biological specificity to the hormone heterodimer. Binds FSHR, a G protein-coupled receptor, on target cells to activate downstream signaling pathways. Follitropin is involved in follicle development and spermatogenesis in reproductive organs.</text>
</comment>
<comment type="subunit">
    <text evidence="2">Heterodimer. The active follitropin is a heterodimer composed of an alpha chain/CGA shared with other hormones and a unique beta chain/FSHB shown here.</text>
</comment>
<comment type="subcellular location">
    <subcellularLocation>
        <location evidence="2">Secreted</location>
    </subcellularLocation>
    <text evidence="2">Efficient secretion requires dimerization with CGA.</text>
</comment>
<comment type="similarity">
    <text evidence="3">Belongs to the glycoprotein hormones subunit beta family.</text>
</comment>
<gene>
    <name type="primary">FSHB</name>
</gene>
<proteinExistence type="evidence at transcript level"/>